<sequence>MSGIVTYGSYIPRYRIKPDEIARVWGENPERIKNGIFILSKSVPAPDEDVATISVEAARNALKRKKINPKEIGAIYVGSESHPYAVKPTATIVGSAIGVDFSLFAADYEFACKAGTAGMQNVKAMVDAGMIKYGLAIGADTSQGAPGDALEYSASAGGSAFIIGKDDVIAEINSTLSVASDTPDFWRREGQPYPSHGERFTGEPAYFRHVVNAAKMMMERMETQPKDYDYVVFHQPNGKFPTRAAKLLGFEEKQYKDGLITPYIGNTYSGSMMTGLSSILDVSKPGDHILAVSFGSGAGSDAFDITVTDRIEEMDRNKAPTIKKMLEKIKWVDYAIYAKYKKKIVLGDGIE</sequence>
<evidence type="ECO:0000255" key="1">
    <source>
        <dbReference type="HAMAP-Rule" id="MF_01409"/>
    </source>
</evidence>
<proteinExistence type="inferred from homology"/>
<reference key="1">
    <citation type="journal article" date="2000" name="Proc. Natl. Acad. Sci. U.S.A.">
        <title>Archaeal adaptation to higher temperatures revealed by genomic sequence of Thermoplasma volcanium.</title>
        <authorList>
            <person name="Kawashima T."/>
            <person name="Amano N."/>
            <person name="Koike H."/>
            <person name="Makino S."/>
            <person name="Higuchi S."/>
            <person name="Kawashima-Ohya Y."/>
            <person name="Watanabe K."/>
            <person name="Yamazaki M."/>
            <person name="Kanehori K."/>
            <person name="Kawamoto T."/>
            <person name="Nunoshiba T."/>
            <person name="Yamamoto Y."/>
            <person name="Aramaki H."/>
            <person name="Makino K."/>
            <person name="Suzuki M."/>
        </authorList>
    </citation>
    <scope>NUCLEOTIDE SEQUENCE [LARGE SCALE GENOMIC DNA]</scope>
    <source>
        <strain>ATCC 51530 / DSM 4299 / JCM 9571 / NBRC 15438 / GSS1</strain>
    </source>
</reference>
<name>HMGCS_THEVO</name>
<keyword id="KW-0012">Acyltransferase</keyword>
<keyword id="KW-0414">Isoprene biosynthesis</keyword>
<keyword id="KW-0808">Transferase</keyword>
<accession>Q97CG9</accession>
<protein>
    <recommendedName>
        <fullName evidence="1">Hydroxymethylglutaryl-CoA synthase</fullName>
        <shortName evidence="1">HMG-CoA synthase</shortName>
        <shortName evidence="1">HMGCS</shortName>
        <ecNumber evidence="1">2.3.3.10</ecNumber>
    </recommendedName>
</protein>
<comment type="function">
    <text evidence="1">Catalyzes the condensation of acetyl-CoA with acetoacetyl-CoA to form 3-hydroxy-3-methylglutaryl-CoA (HMG-CoA). Functions in the mevalonate (MVA) pathway leading to isopentenyl diphosphate (IPP), a key precursor for the biosynthesis of isoprenoid compounds that are building blocks of archaeal membrane lipids.</text>
</comment>
<comment type="catalytic activity">
    <reaction evidence="1">
        <text>acetoacetyl-CoA + acetyl-CoA + H2O = (3S)-3-hydroxy-3-methylglutaryl-CoA + CoA + H(+)</text>
        <dbReference type="Rhea" id="RHEA:10188"/>
        <dbReference type="ChEBI" id="CHEBI:15377"/>
        <dbReference type="ChEBI" id="CHEBI:15378"/>
        <dbReference type="ChEBI" id="CHEBI:43074"/>
        <dbReference type="ChEBI" id="CHEBI:57286"/>
        <dbReference type="ChEBI" id="CHEBI:57287"/>
        <dbReference type="ChEBI" id="CHEBI:57288"/>
        <dbReference type="EC" id="2.3.3.10"/>
    </reaction>
    <physiologicalReaction direction="left-to-right" evidence="1">
        <dbReference type="Rhea" id="RHEA:10189"/>
    </physiologicalReaction>
</comment>
<comment type="pathway">
    <text evidence="1">Metabolic intermediate biosynthesis; (R)-mevalonate biosynthesis; (R)-mevalonate from acetyl-CoA: step 2/3.</text>
</comment>
<comment type="subunit">
    <text evidence="1">Interacts with acetoacetyl-CoA thiolase that catalyzes the precedent step in the pathway and with a DUF35 protein. The acetoacetyl-CoA thiolase/HMG-CoA synthase complex channels the intermediate via a fused CoA-binding site, which allows for efficient coupling of the endergonic thiolase reaction with the exergonic HMGCS reaction.</text>
</comment>
<comment type="similarity">
    <text evidence="1">Belongs to the thiolase-like superfamily. Archaeal HMG-CoA synthase family.</text>
</comment>
<dbReference type="EC" id="2.3.3.10" evidence="1"/>
<dbReference type="EMBL" id="BA000011">
    <property type="protein sequence ID" value="BAB59274.1"/>
    <property type="molecule type" value="Genomic_DNA"/>
</dbReference>
<dbReference type="RefSeq" id="WP_010916386.1">
    <property type="nucleotide sequence ID" value="NC_002689.2"/>
</dbReference>
<dbReference type="SMR" id="Q97CG9"/>
<dbReference type="STRING" id="273116.gene:9380901"/>
<dbReference type="PaxDb" id="273116-14324346"/>
<dbReference type="GeneID" id="1441616"/>
<dbReference type="KEGG" id="tvo:TVG0141026"/>
<dbReference type="eggNOG" id="arCOG01767">
    <property type="taxonomic scope" value="Archaea"/>
</dbReference>
<dbReference type="HOGENOM" id="CLU_039592_7_0_2"/>
<dbReference type="OrthoDB" id="5812at2157"/>
<dbReference type="PhylomeDB" id="Q97CG9"/>
<dbReference type="UniPathway" id="UPA00058">
    <property type="reaction ID" value="UER00102"/>
</dbReference>
<dbReference type="Proteomes" id="UP000001017">
    <property type="component" value="Chromosome"/>
</dbReference>
<dbReference type="GO" id="GO:0003985">
    <property type="term" value="F:acetyl-CoA C-acetyltransferase activity"/>
    <property type="evidence" value="ECO:0007669"/>
    <property type="project" value="UniProtKB-UniRule"/>
</dbReference>
<dbReference type="GO" id="GO:0004421">
    <property type="term" value="F:hydroxymethylglutaryl-CoA synthase activity"/>
    <property type="evidence" value="ECO:0007669"/>
    <property type="project" value="InterPro"/>
</dbReference>
<dbReference type="GO" id="GO:0010142">
    <property type="term" value="P:farnesyl diphosphate biosynthetic process, mevalonate pathway"/>
    <property type="evidence" value="ECO:0007669"/>
    <property type="project" value="TreeGrafter"/>
</dbReference>
<dbReference type="GO" id="GO:0019287">
    <property type="term" value="P:isopentenyl diphosphate biosynthetic process, mevalonate pathway"/>
    <property type="evidence" value="ECO:0007669"/>
    <property type="project" value="UniProtKB-UniRule"/>
</dbReference>
<dbReference type="CDD" id="cd00827">
    <property type="entry name" value="init_cond_enzymes"/>
    <property type="match status" value="1"/>
</dbReference>
<dbReference type="Gene3D" id="3.40.47.10">
    <property type="match status" value="1"/>
</dbReference>
<dbReference type="HAMAP" id="MF_01409">
    <property type="entry name" value="HMG_CoA_synth_arch"/>
    <property type="match status" value="1"/>
</dbReference>
<dbReference type="InterPro" id="IPR013747">
    <property type="entry name" value="ACP_syn_III_C"/>
</dbReference>
<dbReference type="InterPro" id="IPR004656">
    <property type="entry name" value="HMG_CoA_Synthase"/>
</dbReference>
<dbReference type="InterPro" id="IPR016039">
    <property type="entry name" value="Thiolase-like"/>
</dbReference>
<dbReference type="NCBIfam" id="TIGR00748">
    <property type="entry name" value="HMG_CoA_syn_Arc"/>
    <property type="match status" value="1"/>
</dbReference>
<dbReference type="NCBIfam" id="NF003274">
    <property type="entry name" value="PRK04262.1"/>
    <property type="match status" value="1"/>
</dbReference>
<dbReference type="PANTHER" id="PTHR43323">
    <property type="entry name" value="3-HYDROXY-3-METHYLGLUTARYL COENZYME A SYNTHASE"/>
    <property type="match status" value="1"/>
</dbReference>
<dbReference type="PANTHER" id="PTHR43323:SF2">
    <property type="entry name" value="HYDROXYMETHYLGLUTARYL-COA SYNTHASE"/>
    <property type="match status" value="1"/>
</dbReference>
<dbReference type="Pfam" id="PF08541">
    <property type="entry name" value="ACP_syn_III_C"/>
    <property type="match status" value="1"/>
</dbReference>
<dbReference type="SUPFAM" id="SSF53901">
    <property type="entry name" value="Thiolase-like"/>
    <property type="match status" value="2"/>
</dbReference>
<feature type="chain" id="PRO_0000057628" description="Hydroxymethylglutaryl-CoA synthase">
    <location>
        <begin position="1"/>
        <end position="351"/>
    </location>
</feature>
<feature type="active site" description="Proton donor/acceptor" evidence="1">
    <location>
        <position position="80"/>
    </location>
</feature>
<feature type="active site" description="Acyl-thioester intermediate" evidence="1">
    <location>
        <position position="112"/>
    </location>
</feature>
<feature type="active site" description="Proton donor/acceptor" evidence="1">
    <location>
        <position position="234"/>
    </location>
</feature>
<feature type="binding site" evidence="1">
    <location>
        <position position="112"/>
    </location>
    <ligand>
        <name>(3S)-3-hydroxy-3-methylglutaryl-CoA</name>
        <dbReference type="ChEBI" id="CHEBI:43074"/>
    </ligand>
</feature>
<feature type="binding site" evidence="1">
    <location>
        <position position="153"/>
    </location>
    <ligand>
        <name>(3S)-3-hydroxy-3-methylglutaryl-CoA</name>
        <dbReference type="ChEBI" id="CHEBI:43074"/>
    </ligand>
</feature>
<feature type="binding site" evidence="1">
    <location>
        <position position="199"/>
    </location>
    <ligand>
        <name>CoA</name>
        <dbReference type="ChEBI" id="CHEBI:57287"/>
        <note>ligand shared with acetoacetyl-CoA thiolase</note>
    </ligand>
</feature>
<feature type="binding site" evidence="1">
    <location>
        <position position="201"/>
    </location>
    <ligand>
        <name>(3S)-3-hydroxy-3-methylglutaryl-CoA</name>
        <dbReference type="ChEBI" id="CHEBI:43074"/>
    </ligand>
</feature>
<feature type="binding site" evidence="1">
    <location>
        <position position="234"/>
    </location>
    <ligand>
        <name>(3S)-3-hydroxy-3-methylglutaryl-CoA</name>
        <dbReference type="ChEBI" id="CHEBI:43074"/>
    </ligand>
</feature>
<feature type="binding site" evidence="1">
    <location>
        <position position="239"/>
    </location>
    <ligand>
        <name>CoA</name>
        <dbReference type="ChEBI" id="CHEBI:57287"/>
        <note>ligand shared with acetoacetyl-CoA thiolase</note>
    </ligand>
</feature>
<feature type="binding site" evidence="1">
    <location>
        <position position="243"/>
    </location>
    <ligand>
        <name>(3S)-3-hydroxy-3-methylglutaryl-CoA</name>
        <dbReference type="ChEBI" id="CHEBI:43074"/>
    </ligand>
</feature>
<feature type="binding site" evidence="1">
    <location>
        <position position="266"/>
    </location>
    <ligand>
        <name>(3S)-3-hydroxy-3-methylglutaryl-CoA</name>
        <dbReference type="ChEBI" id="CHEBI:43074"/>
    </ligand>
</feature>
<feature type="binding site" evidence="1">
    <location>
        <position position="296"/>
    </location>
    <ligand>
        <name>(3S)-3-hydroxy-3-methylglutaryl-CoA</name>
        <dbReference type="ChEBI" id="CHEBI:43074"/>
    </ligand>
</feature>
<gene>
    <name type="ordered locus">TV0132</name>
    <name type="ORF">TVG0141026</name>
</gene>
<organism>
    <name type="scientific">Thermoplasma volcanium (strain ATCC 51530 / DSM 4299 / JCM 9571 / NBRC 15438 / GSS1)</name>
    <dbReference type="NCBI Taxonomy" id="273116"/>
    <lineage>
        <taxon>Archaea</taxon>
        <taxon>Methanobacteriati</taxon>
        <taxon>Thermoplasmatota</taxon>
        <taxon>Thermoplasmata</taxon>
        <taxon>Thermoplasmatales</taxon>
        <taxon>Thermoplasmataceae</taxon>
        <taxon>Thermoplasma</taxon>
    </lineage>
</organism>